<organism>
    <name type="scientific">Xanthomonas campestris pv. campestris (strain 8004)</name>
    <dbReference type="NCBI Taxonomy" id="314565"/>
    <lineage>
        <taxon>Bacteria</taxon>
        <taxon>Pseudomonadati</taxon>
        <taxon>Pseudomonadota</taxon>
        <taxon>Gammaproteobacteria</taxon>
        <taxon>Lysobacterales</taxon>
        <taxon>Lysobacteraceae</taxon>
        <taxon>Xanthomonas</taxon>
    </lineage>
</organism>
<sequence length="106" mass="11824">MYAVLVTGGKQYRVAQGETLRVEKLEVEAGNEIKFDTILMLGDSDGIKLGDALKGASVTAKVVAHGRADKVRIIKFRRRKHHMKRQGHRQYYTEIEITGIAGGDKK</sequence>
<evidence type="ECO:0000255" key="1">
    <source>
        <dbReference type="HAMAP-Rule" id="MF_01363"/>
    </source>
</evidence>
<evidence type="ECO:0000305" key="2"/>
<protein>
    <recommendedName>
        <fullName evidence="1">Large ribosomal subunit protein bL21</fullName>
    </recommendedName>
    <alternativeName>
        <fullName evidence="2">50S ribosomal protein L21</fullName>
    </alternativeName>
</protein>
<dbReference type="EMBL" id="CP000050">
    <property type="protein sequence ID" value="AAY50139.1"/>
    <property type="molecule type" value="Genomic_DNA"/>
</dbReference>
<dbReference type="RefSeq" id="WP_005989959.1">
    <property type="nucleotide sequence ID" value="NZ_CP155948.1"/>
</dbReference>
<dbReference type="SMR" id="Q4US34"/>
<dbReference type="GeneID" id="95583591"/>
<dbReference type="KEGG" id="xcb:XC_3093"/>
<dbReference type="HOGENOM" id="CLU_061463_3_3_6"/>
<dbReference type="Proteomes" id="UP000000420">
    <property type="component" value="Chromosome"/>
</dbReference>
<dbReference type="GO" id="GO:0005737">
    <property type="term" value="C:cytoplasm"/>
    <property type="evidence" value="ECO:0007669"/>
    <property type="project" value="UniProtKB-ARBA"/>
</dbReference>
<dbReference type="GO" id="GO:1990904">
    <property type="term" value="C:ribonucleoprotein complex"/>
    <property type="evidence" value="ECO:0007669"/>
    <property type="project" value="UniProtKB-KW"/>
</dbReference>
<dbReference type="GO" id="GO:0005840">
    <property type="term" value="C:ribosome"/>
    <property type="evidence" value="ECO:0007669"/>
    <property type="project" value="UniProtKB-KW"/>
</dbReference>
<dbReference type="GO" id="GO:0019843">
    <property type="term" value="F:rRNA binding"/>
    <property type="evidence" value="ECO:0007669"/>
    <property type="project" value="UniProtKB-UniRule"/>
</dbReference>
<dbReference type="GO" id="GO:0003735">
    <property type="term" value="F:structural constituent of ribosome"/>
    <property type="evidence" value="ECO:0007669"/>
    <property type="project" value="InterPro"/>
</dbReference>
<dbReference type="GO" id="GO:0006412">
    <property type="term" value="P:translation"/>
    <property type="evidence" value="ECO:0007669"/>
    <property type="project" value="UniProtKB-UniRule"/>
</dbReference>
<dbReference type="HAMAP" id="MF_01363">
    <property type="entry name" value="Ribosomal_bL21"/>
    <property type="match status" value="1"/>
</dbReference>
<dbReference type="InterPro" id="IPR028909">
    <property type="entry name" value="bL21-like"/>
</dbReference>
<dbReference type="InterPro" id="IPR036164">
    <property type="entry name" value="bL21-like_sf"/>
</dbReference>
<dbReference type="InterPro" id="IPR001787">
    <property type="entry name" value="Ribosomal_bL21"/>
</dbReference>
<dbReference type="InterPro" id="IPR018258">
    <property type="entry name" value="Ribosomal_bL21_CS"/>
</dbReference>
<dbReference type="NCBIfam" id="TIGR00061">
    <property type="entry name" value="L21"/>
    <property type="match status" value="1"/>
</dbReference>
<dbReference type="PANTHER" id="PTHR21349">
    <property type="entry name" value="50S RIBOSOMAL PROTEIN L21"/>
    <property type="match status" value="1"/>
</dbReference>
<dbReference type="PANTHER" id="PTHR21349:SF0">
    <property type="entry name" value="LARGE RIBOSOMAL SUBUNIT PROTEIN BL21M"/>
    <property type="match status" value="1"/>
</dbReference>
<dbReference type="Pfam" id="PF00829">
    <property type="entry name" value="Ribosomal_L21p"/>
    <property type="match status" value="1"/>
</dbReference>
<dbReference type="SUPFAM" id="SSF141091">
    <property type="entry name" value="L21p-like"/>
    <property type="match status" value="1"/>
</dbReference>
<dbReference type="PROSITE" id="PS01169">
    <property type="entry name" value="RIBOSOMAL_L21"/>
    <property type="match status" value="1"/>
</dbReference>
<feature type="chain" id="PRO_0000269429" description="Large ribosomal subunit protein bL21">
    <location>
        <begin position="1"/>
        <end position="106"/>
    </location>
</feature>
<reference key="1">
    <citation type="journal article" date="2005" name="Genome Res.">
        <title>Comparative and functional genomic analyses of the pathogenicity of phytopathogen Xanthomonas campestris pv. campestris.</title>
        <authorList>
            <person name="Qian W."/>
            <person name="Jia Y."/>
            <person name="Ren S.-X."/>
            <person name="He Y.-Q."/>
            <person name="Feng J.-X."/>
            <person name="Lu L.-F."/>
            <person name="Sun Q."/>
            <person name="Ying G."/>
            <person name="Tang D.-J."/>
            <person name="Tang H."/>
            <person name="Wu W."/>
            <person name="Hao P."/>
            <person name="Wang L."/>
            <person name="Jiang B.-L."/>
            <person name="Zeng S."/>
            <person name="Gu W.-Y."/>
            <person name="Lu G."/>
            <person name="Rong L."/>
            <person name="Tian Y."/>
            <person name="Yao Z."/>
            <person name="Fu G."/>
            <person name="Chen B."/>
            <person name="Fang R."/>
            <person name="Qiang B."/>
            <person name="Chen Z."/>
            <person name="Zhao G.-P."/>
            <person name="Tang J.-L."/>
            <person name="He C."/>
        </authorList>
    </citation>
    <scope>NUCLEOTIDE SEQUENCE [LARGE SCALE GENOMIC DNA]</scope>
    <source>
        <strain>8004</strain>
    </source>
</reference>
<accession>Q4US34</accession>
<comment type="function">
    <text evidence="1">This protein binds to 23S rRNA in the presence of protein L20.</text>
</comment>
<comment type="subunit">
    <text evidence="1">Part of the 50S ribosomal subunit. Contacts protein L20.</text>
</comment>
<comment type="similarity">
    <text evidence="1">Belongs to the bacterial ribosomal protein bL21 family.</text>
</comment>
<name>RL21_XANC8</name>
<proteinExistence type="inferred from homology"/>
<keyword id="KW-0687">Ribonucleoprotein</keyword>
<keyword id="KW-0689">Ribosomal protein</keyword>
<keyword id="KW-0694">RNA-binding</keyword>
<keyword id="KW-0699">rRNA-binding</keyword>
<gene>
    <name evidence="1" type="primary">rplU</name>
    <name type="ordered locus">XC_3093</name>
</gene>